<organism>
    <name type="scientific">Yersinia pestis</name>
    <dbReference type="NCBI Taxonomy" id="632"/>
    <lineage>
        <taxon>Bacteria</taxon>
        <taxon>Pseudomonadati</taxon>
        <taxon>Pseudomonadota</taxon>
        <taxon>Gammaproteobacteria</taxon>
        <taxon>Enterobacterales</taxon>
        <taxon>Yersiniaceae</taxon>
        <taxon>Yersinia</taxon>
    </lineage>
</organism>
<name>RNFD_YERPE</name>
<reference key="1">
    <citation type="journal article" date="2001" name="Nature">
        <title>Genome sequence of Yersinia pestis, the causative agent of plague.</title>
        <authorList>
            <person name="Parkhill J."/>
            <person name="Wren B.W."/>
            <person name="Thomson N.R."/>
            <person name="Titball R.W."/>
            <person name="Holden M.T.G."/>
            <person name="Prentice M.B."/>
            <person name="Sebaihia M."/>
            <person name="James K.D."/>
            <person name="Churcher C.M."/>
            <person name="Mungall K.L."/>
            <person name="Baker S."/>
            <person name="Basham D."/>
            <person name="Bentley S.D."/>
            <person name="Brooks K."/>
            <person name="Cerdeno-Tarraga A.-M."/>
            <person name="Chillingworth T."/>
            <person name="Cronin A."/>
            <person name="Davies R.M."/>
            <person name="Davis P."/>
            <person name="Dougan G."/>
            <person name="Feltwell T."/>
            <person name="Hamlin N."/>
            <person name="Holroyd S."/>
            <person name="Jagels K."/>
            <person name="Karlyshev A.V."/>
            <person name="Leather S."/>
            <person name="Moule S."/>
            <person name="Oyston P.C.F."/>
            <person name="Quail M.A."/>
            <person name="Rutherford K.M."/>
            <person name="Simmonds M."/>
            <person name="Skelton J."/>
            <person name="Stevens K."/>
            <person name="Whitehead S."/>
            <person name="Barrell B.G."/>
        </authorList>
    </citation>
    <scope>NUCLEOTIDE SEQUENCE [LARGE SCALE GENOMIC DNA]</scope>
    <source>
        <strain>CO-92 / Biovar Orientalis</strain>
    </source>
</reference>
<reference key="2">
    <citation type="journal article" date="2002" name="J. Bacteriol.">
        <title>Genome sequence of Yersinia pestis KIM.</title>
        <authorList>
            <person name="Deng W."/>
            <person name="Burland V."/>
            <person name="Plunkett G. III"/>
            <person name="Boutin A."/>
            <person name="Mayhew G.F."/>
            <person name="Liss P."/>
            <person name="Perna N.T."/>
            <person name="Rose D.J."/>
            <person name="Mau B."/>
            <person name="Zhou S."/>
            <person name="Schwartz D.C."/>
            <person name="Fetherston J.D."/>
            <person name="Lindler L.E."/>
            <person name="Brubaker R.R."/>
            <person name="Plano G.V."/>
            <person name="Straley S.C."/>
            <person name="McDonough K.A."/>
            <person name="Nilles M.L."/>
            <person name="Matson J.S."/>
            <person name="Blattner F.R."/>
            <person name="Perry R.D."/>
        </authorList>
    </citation>
    <scope>NUCLEOTIDE SEQUENCE [LARGE SCALE GENOMIC DNA]</scope>
    <source>
        <strain>KIM10+ / Biovar Mediaevalis</strain>
    </source>
</reference>
<reference key="3">
    <citation type="journal article" date="2004" name="DNA Res.">
        <title>Complete genome sequence of Yersinia pestis strain 91001, an isolate avirulent to humans.</title>
        <authorList>
            <person name="Song Y."/>
            <person name="Tong Z."/>
            <person name="Wang J."/>
            <person name="Wang L."/>
            <person name="Guo Z."/>
            <person name="Han Y."/>
            <person name="Zhang J."/>
            <person name="Pei D."/>
            <person name="Zhou D."/>
            <person name="Qin H."/>
            <person name="Pang X."/>
            <person name="Han Y."/>
            <person name="Zhai J."/>
            <person name="Li M."/>
            <person name="Cui B."/>
            <person name="Qi Z."/>
            <person name="Jin L."/>
            <person name="Dai R."/>
            <person name="Chen F."/>
            <person name="Li S."/>
            <person name="Ye C."/>
            <person name="Du Z."/>
            <person name="Lin W."/>
            <person name="Wang J."/>
            <person name="Yu J."/>
            <person name="Yang H."/>
            <person name="Wang J."/>
            <person name="Huang P."/>
            <person name="Yang R."/>
        </authorList>
    </citation>
    <scope>NUCLEOTIDE SEQUENCE [LARGE SCALE GENOMIC DNA]</scope>
    <source>
        <strain>91001 / Biovar Mediaevalis</strain>
    </source>
</reference>
<sequence length="351" mass="38112">MQIASSPFTHNQRSTRRIMLLVILACIPGIIAQTYFFGYGSLIQVMLAMITALLAEGAVLQLRKQPVMARLQDNSALLTALLLGISLPPLAPWWMIVLGTLFAIVIAKQLYGGLGQNPFNPAMVGYVVLLISFPVQMTSWLPPLPLQGTSVGFYDSLLTIFTGYTHSGENIHQLQVGYDGISQATPLDTFKTSLRSQPADQILQQPIFGGVLAGLGWQWVNTGFLVGGLLLLWRKAIHWHIPVSFLLALGGCAAVSWMIAPQSFASPMLHLFSGATMLGAFFIATDPVSASTTPRGRLIFGALIGILVWLIRVYGGYPDSVAFAVLLANITVPLIDHYTQPRVYGHKSGHK</sequence>
<gene>
    <name evidence="1" type="primary">rnfD</name>
    <name type="ordered locus">YPO2242</name>
    <name type="ordered locus">y2083</name>
    <name type="ordered locus">YP_2040</name>
</gene>
<comment type="function">
    <text evidence="1">Part of a membrane-bound complex that couples electron transfer with translocation of ions across the membrane.</text>
</comment>
<comment type="cofactor">
    <cofactor evidence="1">
        <name>FMN</name>
        <dbReference type="ChEBI" id="CHEBI:58210"/>
    </cofactor>
</comment>
<comment type="subunit">
    <text evidence="1">The complex is composed of six subunits: RnfA, RnfB, RnfC, RnfD, RnfE and RnfG.</text>
</comment>
<comment type="subcellular location">
    <subcellularLocation>
        <location evidence="1">Cell inner membrane</location>
        <topology evidence="1">Multi-pass membrane protein</topology>
    </subcellularLocation>
</comment>
<comment type="similarity">
    <text evidence="1">Belongs to the NqrB/RnfD family.</text>
</comment>
<comment type="sequence caution" evidence="2">
    <conflict type="erroneous initiation">
        <sequence resource="EMBL-CDS" id="AAM85647"/>
    </conflict>
</comment>
<comment type="sequence caution" evidence="2">
    <conflict type="erroneous initiation">
        <sequence resource="EMBL-CDS" id="AAS62256"/>
    </conflict>
</comment>
<proteinExistence type="inferred from homology"/>
<dbReference type="EC" id="7.-.-.-" evidence="1"/>
<dbReference type="EMBL" id="AL590842">
    <property type="protein sequence ID" value="CAL20871.1"/>
    <property type="molecule type" value="Genomic_DNA"/>
</dbReference>
<dbReference type="EMBL" id="AE009952">
    <property type="protein sequence ID" value="AAM85647.1"/>
    <property type="status" value="ALT_INIT"/>
    <property type="molecule type" value="Genomic_DNA"/>
</dbReference>
<dbReference type="EMBL" id="AE017042">
    <property type="protein sequence ID" value="AAS62256.1"/>
    <property type="status" value="ALT_INIT"/>
    <property type="molecule type" value="Genomic_DNA"/>
</dbReference>
<dbReference type="PIR" id="AD0273">
    <property type="entry name" value="AD0273"/>
</dbReference>
<dbReference type="RefSeq" id="YP_002347213.1">
    <property type="nucleotide sequence ID" value="NC_003143.1"/>
</dbReference>
<dbReference type="SMR" id="Q8ZED2"/>
<dbReference type="STRING" id="214092.YPO2242"/>
<dbReference type="PaxDb" id="214092-YPO2242"/>
<dbReference type="DNASU" id="1147030"/>
<dbReference type="EnsemblBacteria" id="AAS62256">
    <property type="protein sequence ID" value="AAS62256"/>
    <property type="gene ID" value="YP_2040"/>
</dbReference>
<dbReference type="KEGG" id="ype:YPO2242"/>
<dbReference type="KEGG" id="ypj:CH55_332"/>
<dbReference type="KEGG" id="ypk:y2083"/>
<dbReference type="KEGG" id="ypl:CH46_2872"/>
<dbReference type="KEGG" id="ypm:YP_2040"/>
<dbReference type="KEGG" id="ypv:BZ15_1299"/>
<dbReference type="KEGG" id="ypw:CH59_3879"/>
<dbReference type="PATRIC" id="fig|214092.21.peg.2637"/>
<dbReference type="eggNOG" id="COG4658">
    <property type="taxonomic scope" value="Bacteria"/>
</dbReference>
<dbReference type="HOGENOM" id="CLU_042020_0_0_6"/>
<dbReference type="OMA" id="RLWGGYP"/>
<dbReference type="OrthoDB" id="9776359at2"/>
<dbReference type="Proteomes" id="UP000000815">
    <property type="component" value="Chromosome"/>
</dbReference>
<dbReference type="Proteomes" id="UP000001019">
    <property type="component" value="Chromosome"/>
</dbReference>
<dbReference type="Proteomes" id="UP000002490">
    <property type="component" value="Chromosome"/>
</dbReference>
<dbReference type="GO" id="GO:0005886">
    <property type="term" value="C:plasma membrane"/>
    <property type="evidence" value="ECO:0000318"/>
    <property type="project" value="GO_Central"/>
</dbReference>
<dbReference type="GO" id="GO:0022900">
    <property type="term" value="P:electron transport chain"/>
    <property type="evidence" value="ECO:0007669"/>
    <property type="project" value="UniProtKB-UniRule"/>
</dbReference>
<dbReference type="GO" id="GO:0055085">
    <property type="term" value="P:transmembrane transport"/>
    <property type="evidence" value="ECO:0007669"/>
    <property type="project" value="InterPro"/>
</dbReference>
<dbReference type="HAMAP" id="MF_00462">
    <property type="entry name" value="RsxD_RnfD"/>
    <property type="match status" value="1"/>
</dbReference>
<dbReference type="InterPro" id="IPR004338">
    <property type="entry name" value="NqrB/RnfD"/>
</dbReference>
<dbReference type="InterPro" id="IPR011303">
    <property type="entry name" value="RnfD_bac"/>
</dbReference>
<dbReference type="NCBIfam" id="NF002011">
    <property type="entry name" value="PRK00816.1"/>
    <property type="match status" value="1"/>
</dbReference>
<dbReference type="NCBIfam" id="TIGR01946">
    <property type="entry name" value="rnfD"/>
    <property type="match status" value="1"/>
</dbReference>
<dbReference type="PANTHER" id="PTHR30578">
    <property type="entry name" value="ELECTRON TRANSPORT COMPLEX PROTEIN RNFD"/>
    <property type="match status" value="1"/>
</dbReference>
<dbReference type="PANTHER" id="PTHR30578:SF0">
    <property type="entry name" value="ION-TRANSLOCATING OXIDOREDUCTASE COMPLEX SUBUNIT D"/>
    <property type="match status" value="1"/>
</dbReference>
<dbReference type="Pfam" id="PF03116">
    <property type="entry name" value="NQR2_RnfD_RnfE"/>
    <property type="match status" value="1"/>
</dbReference>
<feature type="chain" id="PRO_0000074467" description="Ion-translocating oxidoreductase complex subunit D">
    <location>
        <begin position="1"/>
        <end position="351"/>
    </location>
</feature>
<feature type="transmembrane region" description="Helical" evidence="1">
    <location>
        <begin position="18"/>
        <end position="38"/>
    </location>
</feature>
<feature type="transmembrane region" description="Helical" evidence="1">
    <location>
        <begin position="40"/>
        <end position="60"/>
    </location>
</feature>
<feature type="transmembrane region" description="Helical" evidence="1">
    <location>
        <begin position="87"/>
        <end position="107"/>
    </location>
</feature>
<feature type="transmembrane region" description="Helical" evidence="1">
    <location>
        <begin position="121"/>
        <end position="141"/>
    </location>
</feature>
<feature type="transmembrane region" description="Helical" evidence="1">
    <location>
        <begin position="211"/>
        <end position="231"/>
    </location>
</feature>
<feature type="transmembrane region" description="Helical" evidence="1">
    <location>
        <begin position="241"/>
        <end position="261"/>
    </location>
</feature>
<feature type="transmembrane region" description="Helical" evidence="1">
    <location>
        <begin position="264"/>
        <end position="284"/>
    </location>
</feature>
<feature type="transmembrane region" description="Helical" evidence="1">
    <location>
        <begin position="298"/>
        <end position="318"/>
    </location>
</feature>
<feature type="transmembrane region" description="Helical" evidence="1">
    <location>
        <begin position="321"/>
        <end position="341"/>
    </location>
</feature>
<feature type="modified residue" description="FMN phosphoryl threonine" evidence="1">
    <location>
        <position position="185"/>
    </location>
</feature>
<evidence type="ECO:0000255" key="1">
    <source>
        <dbReference type="HAMAP-Rule" id="MF_00462"/>
    </source>
</evidence>
<evidence type="ECO:0000305" key="2"/>
<protein>
    <recommendedName>
        <fullName evidence="1">Ion-translocating oxidoreductase complex subunit D</fullName>
        <ecNumber evidence="1">7.-.-.-</ecNumber>
    </recommendedName>
    <alternativeName>
        <fullName evidence="1">Rnf electron transport complex subunit D</fullName>
    </alternativeName>
</protein>
<keyword id="KW-0997">Cell inner membrane</keyword>
<keyword id="KW-1003">Cell membrane</keyword>
<keyword id="KW-0249">Electron transport</keyword>
<keyword id="KW-0285">Flavoprotein</keyword>
<keyword id="KW-0288">FMN</keyword>
<keyword id="KW-0472">Membrane</keyword>
<keyword id="KW-0597">Phosphoprotein</keyword>
<keyword id="KW-1185">Reference proteome</keyword>
<keyword id="KW-1278">Translocase</keyword>
<keyword id="KW-0812">Transmembrane</keyword>
<keyword id="KW-1133">Transmembrane helix</keyword>
<keyword id="KW-0813">Transport</keyword>
<accession>Q8ZED2</accession>
<accession>Q0WES5</accession>